<comment type="function">
    <text evidence="1">Required for rescue of stalled ribosomes mediated by trans-translation. Binds to transfer-messenger RNA (tmRNA), required for stable association of tmRNA with ribosomes. tmRNA and SmpB together mimic tRNA shape, replacing the anticodon stem-loop with SmpB. tmRNA is encoded by the ssrA gene; the 2 termini fold to resemble tRNA(Ala) and it encodes a 'tag peptide', a short internal open reading frame. During trans-translation Ala-aminoacylated tmRNA acts like a tRNA, entering the A-site of stalled ribosomes, displacing the stalled mRNA. The ribosome then switches to translate the ORF on the tmRNA; the nascent peptide is terminated with the 'tag peptide' encoded by the tmRNA and targeted for degradation. The ribosome is freed to recommence translation, which seems to be the essential function of trans-translation.</text>
</comment>
<comment type="subcellular location">
    <subcellularLocation>
        <location evidence="1">Cytoplasm</location>
    </subcellularLocation>
    <text evidence="1">The tmRNA-SmpB complex associates with stalled 70S ribosomes.</text>
</comment>
<comment type="similarity">
    <text evidence="1">Belongs to the SmpB family.</text>
</comment>
<reference key="1">
    <citation type="submission" date="2006-11" db="EMBL/GenBank/DDBJ databases">
        <title>Sequence of Campylobacter fetus subsp. fetus 82-40.</title>
        <authorList>
            <person name="Fouts D.E."/>
            <person name="Nelson K.E."/>
        </authorList>
    </citation>
    <scope>NUCLEOTIDE SEQUENCE [LARGE SCALE GENOMIC DNA]</scope>
    <source>
        <strain>82-40</strain>
    </source>
</reference>
<feature type="chain" id="PRO_0000331028" description="SsrA-binding protein">
    <location>
        <begin position="1"/>
        <end position="151"/>
    </location>
</feature>
<sequence>MSKDLARNKKAFHDYAILETFEAGIALKGSEVKALRAGRANLKDSFVRIIRGELFLLNAHISYLDTTNSYFRPDERAPRKLLMHRRQIDKLFGKVSTDGLTMVALSLYLNSKNIVKANIALAKGKNLHDKREALKQKEANIEARSALKKYI</sequence>
<protein>
    <recommendedName>
        <fullName evidence="1">SsrA-binding protein</fullName>
    </recommendedName>
    <alternativeName>
        <fullName evidence="1">Small protein B</fullName>
    </alternativeName>
</protein>
<evidence type="ECO:0000255" key="1">
    <source>
        <dbReference type="HAMAP-Rule" id="MF_00023"/>
    </source>
</evidence>
<proteinExistence type="inferred from homology"/>
<accession>A0RNV4</accession>
<gene>
    <name evidence="1" type="primary">smpB</name>
    <name type="ordered locus">CFF8240_0712</name>
</gene>
<name>SSRP_CAMFF</name>
<keyword id="KW-0963">Cytoplasm</keyword>
<keyword id="KW-0694">RNA-binding</keyword>
<organism>
    <name type="scientific">Campylobacter fetus subsp. fetus (strain 82-40)</name>
    <dbReference type="NCBI Taxonomy" id="360106"/>
    <lineage>
        <taxon>Bacteria</taxon>
        <taxon>Pseudomonadati</taxon>
        <taxon>Campylobacterota</taxon>
        <taxon>Epsilonproteobacteria</taxon>
        <taxon>Campylobacterales</taxon>
        <taxon>Campylobacteraceae</taxon>
        <taxon>Campylobacter</taxon>
    </lineage>
</organism>
<dbReference type="EMBL" id="CP000487">
    <property type="protein sequence ID" value="ABK82426.1"/>
    <property type="molecule type" value="Genomic_DNA"/>
</dbReference>
<dbReference type="RefSeq" id="WP_002849128.1">
    <property type="nucleotide sequence ID" value="NC_008599.1"/>
</dbReference>
<dbReference type="SMR" id="A0RNV4"/>
<dbReference type="GeneID" id="61064552"/>
<dbReference type="KEGG" id="cff:CFF8240_0712"/>
<dbReference type="eggNOG" id="COG0691">
    <property type="taxonomic scope" value="Bacteria"/>
</dbReference>
<dbReference type="HOGENOM" id="CLU_108953_3_1_7"/>
<dbReference type="Proteomes" id="UP000000760">
    <property type="component" value="Chromosome"/>
</dbReference>
<dbReference type="GO" id="GO:0005829">
    <property type="term" value="C:cytosol"/>
    <property type="evidence" value="ECO:0007669"/>
    <property type="project" value="TreeGrafter"/>
</dbReference>
<dbReference type="GO" id="GO:0003723">
    <property type="term" value="F:RNA binding"/>
    <property type="evidence" value="ECO:0007669"/>
    <property type="project" value="UniProtKB-UniRule"/>
</dbReference>
<dbReference type="GO" id="GO:0070929">
    <property type="term" value="P:trans-translation"/>
    <property type="evidence" value="ECO:0007669"/>
    <property type="project" value="UniProtKB-UniRule"/>
</dbReference>
<dbReference type="CDD" id="cd09294">
    <property type="entry name" value="SmpB"/>
    <property type="match status" value="1"/>
</dbReference>
<dbReference type="Gene3D" id="2.40.280.10">
    <property type="match status" value="1"/>
</dbReference>
<dbReference type="HAMAP" id="MF_00023">
    <property type="entry name" value="SmpB"/>
    <property type="match status" value="1"/>
</dbReference>
<dbReference type="InterPro" id="IPR023620">
    <property type="entry name" value="SmpB"/>
</dbReference>
<dbReference type="InterPro" id="IPR000037">
    <property type="entry name" value="SsrA-bd_prot"/>
</dbReference>
<dbReference type="InterPro" id="IPR020081">
    <property type="entry name" value="SsrA-bd_prot_CS"/>
</dbReference>
<dbReference type="NCBIfam" id="NF003843">
    <property type="entry name" value="PRK05422.1"/>
    <property type="match status" value="1"/>
</dbReference>
<dbReference type="NCBIfam" id="TIGR00086">
    <property type="entry name" value="smpB"/>
    <property type="match status" value="1"/>
</dbReference>
<dbReference type="PANTHER" id="PTHR30308:SF2">
    <property type="entry name" value="SSRA-BINDING PROTEIN"/>
    <property type="match status" value="1"/>
</dbReference>
<dbReference type="PANTHER" id="PTHR30308">
    <property type="entry name" value="TMRNA-BINDING COMPONENT OF TRANS-TRANSLATION TAGGING COMPLEX"/>
    <property type="match status" value="1"/>
</dbReference>
<dbReference type="Pfam" id="PF01668">
    <property type="entry name" value="SmpB"/>
    <property type="match status" value="1"/>
</dbReference>
<dbReference type="SUPFAM" id="SSF74982">
    <property type="entry name" value="Small protein B (SmpB)"/>
    <property type="match status" value="1"/>
</dbReference>
<dbReference type="PROSITE" id="PS01317">
    <property type="entry name" value="SSRP"/>
    <property type="match status" value="1"/>
</dbReference>